<sequence>MKAGRGTLGVCLAKQSQGGDPDKLACGLKKRSQKRNPSPSVVPSWTDQPVADSHGKSRATGAAASEMKHGQSKASLLHHGGFKVLQSLKGSVGRSSAPAASLGKAVALSPAPSEEQLAGMSHGIGDALGSDWPGREPRATDNRGQYLKGESWVSGRPGHPKLREVGFLRGEPPSAGPKGLGTWSELSHRYFELGQLPYAYPYYKVLPEGELRCVSLDRFNPGLSEETVEDEKTLKFFRWSADSRGVTGSAIFQISKSLMP</sequence>
<comment type="function">
    <text evidence="3 4 5">Promotes dephosphorylation of transcriptional activator STAT3 by interacting with both STAT3 and protein phosphatase PTPN2 (PubMed:23917203, PubMed:26026268). This promotes interaction of PTPN2 with STAT3 and mediates STAT3 dephosphorylation by PTPN2, leading to negative regulation of STAT3 transcriptional activator activity (PubMed:23917203, PubMed:26026268). May be required for spermiogenesis or sperm function (PubMed:19659802).</text>
</comment>
<comment type="subunit">
    <text evidence="2 4 5">Interacts with transcriptional activator STAT3; the interaction occurs in both the nucleus and the cytoplasm, is enhanced by IL6 and promotes STAT3 dephosphorylation, leading to negative regulation of STAT3 transcriptional activator activity (PubMed:23917203, PubMed:26026268). Can interact with both unphosphorylated and phosphorylated STAT3 but interacts preferentially with phosphorylated STAT3 in the nucleus (PubMed:23917203, PubMed:26026268). Interacts with protein phosphatase PTPN2/TC45; this promotes interaction of PTPN2 with STAT3, leading to dephosphorylation of STAT3 by PTPN2 (PubMed:16141072).</text>
</comment>
<comment type="subcellular location">
    <subcellularLocation>
        <location evidence="4 5">Nucleus</location>
    </subcellularLocation>
    <subcellularLocation>
        <location evidence="4">Cytoplasm</location>
    </subcellularLocation>
    <subcellularLocation>
        <location evidence="3">Cytoplasmic vesicle</location>
        <location evidence="3">Secretory vesicle</location>
        <location evidence="3">Acrosome</location>
    </subcellularLocation>
    <text evidence="3 4">Localizes to both nucleus and cytoplasm but located predominantly in the nucleus (PubMed:23917203). Detected in the sperm acrosome prior to the acrosome reaction and is likely to be released from acrosome-reacted sperm (PubMed:19659802).</text>
</comment>
<comment type="tissue specificity">
    <text evidence="3">Expressed at high levels in the testis where it is detected within elongated spermatids during the late stages (steps 9-16) of haploid germ cell development and in the tubular lumen (at protein level).</text>
</comment>
<comment type="developmental stage">
    <text evidence="3">In the testis, expressed from 17 days postpartum and expression increases thereafter with age.</text>
</comment>
<comment type="caution">
    <text evidence="8">Originally described as a product of the same gene which produces Smim10l3/Sagsin1 but Fam220a and Smim10l3/Sagsin1 are considered to be 2 separate genes in genome annotation databases such as Ensembl and RefSeq.</text>
</comment>
<comment type="sequence caution" evidence="8">
    <conflict type="miscellaneous discrepancy">
        <sequence resource="EMBL-CDS" id="AAH05638"/>
    </conflict>
    <text>Contaminating sequence. Sequence of unknown origin in the N-terminal part.</text>
</comment>
<protein>
    <recommendedName>
        <fullName>Protein FAM220A</fullName>
    </recommendedName>
    <alternativeName>
        <fullName evidence="6">Acrosomal protein ACPIN1</fullName>
    </alternativeName>
    <alternativeName>
        <fullName evidence="7">STAT3-interacting protein as a repressor</fullName>
    </alternativeName>
</protein>
<dbReference type="EMBL" id="AB374429">
    <property type="protein sequence ID" value="BAH02665.1"/>
    <property type="molecule type" value="mRNA"/>
</dbReference>
<dbReference type="EMBL" id="AY714985">
    <property type="protein sequence ID" value="AAW31134.1"/>
    <property type="molecule type" value="mRNA"/>
</dbReference>
<dbReference type="EMBL" id="AK076127">
    <property type="protein sequence ID" value="BAC36204.1"/>
    <property type="molecule type" value="mRNA"/>
</dbReference>
<dbReference type="EMBL" id="AK156614">
    <property type="protein sequence ID" value="BAE33776.1"/>
    <property type="molecule type" value="mRNA"/>
</dbReference>
<dbReference type="EMBL" id="AK014805">
    <property type="protein sequence ID" value="BAB29560.1"/>
    <property type="molecule type" value="mRNA"/>
</dbReference>
<dbReference type="EMBL" id="BC005638">
    <property type="protein sequence ID" value="AAH05638.2"/>
    <property type="status" value="ALT_INIT"/>
    <property type="molecule type" value="mRNA"/>
</dbReference>
<dbReference type="EMBL" id="BC147186">
    <property type="protein sequence ID" value="AAI47187.1"/>
    <property type="molecule type" value="mRNA"/>
</dbReference>
<dbReference type="EMBL" id="BC147187">
    <property type="protein sequence ID" value="AAI47188.1"/>
    <property type="molecule type" value="mRNA"/>
</dbReference>
<dbReference type="CCDS" id="CCDS51690.1"/>
<dbReference type="RefSeq" id="NP_080326.2">
    <property type="nucleotide sequence ID" value="NM_026050.3"/>
</dbReference>
<dbReference type="RefSeq" id="NP_598464.3">
    <property type="nucleotide sequence ID" value="NM_133703.4"/>
</dbReference>
<dbReference type="FunCoup" id="Q3ZN08">
    <property type="interactions" value="364"/>
</dbReference>
<dbReference type="STRING" id="10090.ENSMUSP00000126480"/>
<dbReference type="PhosphoSitePlus" id="Q3ZN08"/>
<dbReference type="PaxDb" id="10090-ENSMUSP00000126480"/>
<dbReference type="DNASU" id="67238"/>
<dbReference type="Ensembl" id="ENSMUST00000196487.2">
    <property type="protein sequence ID" value="ENSMUSP00000143202.2"/>
    <property type="gene ID" value="ENSMUSG00000083012.10"/>
</dbReference>
<dbReference type="Ensembl" id="ENSMUST00000200267.2">
    <property type="protein sequence ID" value="ENSMUSP00000142548.2"/>
    <property type="gene ID" value="ENSMUSG00000083012.10"/>
</dbReference>
<dbReference type="GeneID" id="67238"/>
<dbReference type="KEGG" id="mmu:67238"/>
<dbReference type="UCSC" id="uc009akm.2">
    <property type="organism name" value="mouse"/>
</dbReference>
<dbReference type="CTD" id="84792"/>
<dbReference type="MGI" id="MGI:1914488">
    <property type="gene designation" value="Fam220a"/>
</dbReference>
<dbReference type="VEuPathDB" id="HostDB:ENSMUSG00000083012"/>
<dbReference type="VEuPathDB" id="HostDB:ENSMUSG00000118332"/>
<dbReference type="eggNOG" id="ENOG502S2EY">
    <property type="taxonomic scope" value="Eukaryota"/>
</dbReference>
<dbReference type="GeneTree" id="ENSGT00390000014156"/>
<dbReference type="HOGENOM" id="CLU_089176_0_0_1"/>
<dbReference type="InParanoid" id="Q3ZN08"/>
<dbReference type="OMA" id="CHKGEPW"/>
<dbReference type="OrthoDB" id="60433at2759"/>
<dbReference type="PhylomeDB" id="Q3ZN08"/>
<dbReference type="TreeFam" id="TF336869"/>
<dbReference type="BioGRID-ORCS" id="67238">
    <property type="hits" value="2 hits in 28 CRISPR screens"/>
</dbReference>
<dbReference type="ChiTaRS" id="Fam220a">
    <property type="organism name" value="mouse"/>
</dbReference>
<dbReference type="PRO" id="PR:Q3ZN08"/>
<dbReference type="Proteomes" id="UP000000589">
    <property type="component" value="Chromosome 5"/>
</dbReference>
<dbReference type="RNAct" id="Q3ZN08">
    <property type="molecule type" value="protein"/>
</dbReference>
<dbReference type="Bgee" id="ENSMUSG00000083012">
    <property type="expression patterns" value="Expressed in animal zygote and 63 other cell types or tissues"/>
</dbReference>
<dbReference type="GO" id="GO:0001669">
    <property type="term" value="C:acrosomal vesicle"/>
    <property type="evidence" value="ECO:0000314"/>
    <property type="project" value="UniProtKB"/>
</dbReference>
<dbReference type="GO" id="GO:0005737">
    <property type="term" value="C:cytoplasm"/>
    <property type="evidence" value="ECO:0000314"/>
    <property type="project" value="UniProtKB"/>
</dbReference>
<dbReference type="GO" id="GO:0005634">
    <property type="term" value="C:nucleus"/>
    <property type="evidence" value="ECO:0000314"/>
    <property type="project" value="UniProtKB"/>
</dbReference>
<dbReference type="GO" id="GO:0097677">
    <property type="term" value="F:STAT family protein binding"/>
    <property type="evidence" value="ECO:0000353"/>
    <property type="project" value="MGI"/>
</dbReference>
<dbReference type="GO" id="GO:0035556">
    <property type="term" value="P:intracellular signal transduction"/>
    <property type="evidence" value="ECO:0000314"/>
    <property type="project" value="UniProtKB"/>
</dbReference>
<dbReference type="GO" id="GO:0000122">
    <property type="term" value="P:negative regulation of transcription by RNA polymerase II"/>
    <property type="evidence" value="ECO:0000353"/>
    <property type="project" value="MGI"/>
</dbReference>
<dbReference type="InterPro" id="IPR040355">
    <property type="entry name" value="FAM220A"/>
</dbReference>
<dbReference type="InterPro" id="IPR029155">
    <property type="entry name" value="SIPAR"/>
</dbReference>
<dbReference type="PANTHER" id="PTHR31980">
    <property type="entry name" value="PROTEIN FAM220A"/>
    <property type="match status" value="1"/>
</dbReference>
<dbReference type="PANTHER" id="PTHR31980:SF1">
    <property type="entry name" value="PROTEIN FAM220A"/>
    <property type="match status" value="1"/>
</dbReference>
<dbReference type="Pfam" id="PF15487">
    <property type="entry name" value="FAM220"/>
    <property type="match status" value="1"/>
</dbReference>
<reference key="1">
    <citation type="journal article" date="2009" name="Int. J. Urol.">
        <title>Unique alternative translation from two open reading frames on Acpin1 mRNA yields an acrosomal protein and a salivary-gland-specific protein.</title>
        <authorList>
            <person name="Ueda T."/>
            <person name="Manabe H."/>
            <person name="Tokuhiro K."/>
            <person name="Hirose M."/>
            <person name="Matsuoka Y."/>
            <person name="Miyagawa Y."/>
            <person name="Tsujimura A."/>
            <person name="Fujita K."/>
            <person name="Wada M."/>
            <person name="Okuyama A."/>
            <person name="Nishimune Y."/>
            <person name="Tanaka H."/>
        </authorList>
    </citation>
    <scope>NUCLEOTIDE SEQUENCE [MRNA]</scope>
    <scope>FUNCTION</scope>
    <scope>SUBCELLULAR LOCATION</scope>
    <scope>TISSUE SPECIFICITY</scope>
    <scope>DEVELOPMENTAL STAGE</scope>
    <source>
        <tissue>Testis</tissue>
    </source>
</reference>
<reference key="2">
    <citation type="journal article" date="2013" name="Cell. Signal.">
        <title>SIPAR negatively regulates STAT3 signaling and inhibits progression of melanoma.</title>
        <authorList>
            <person name="Ren F."/>
            <person name="Su F."/>
            <person name="Ning H."/>
            <person name="Wang Y."/>
            <person name="Geng Y."/>
            <person name="Feng Y."/>
            <person name="Wang Y."/>
            <person name="Zhang Y."/>
            <person name="Jin Z."/>
            <person name="Li Y."/>
            <person name="Jia B."/>
            <person name="Chang Z."/>
        </authorList>
    </citation>
    <scope>NUCLEOTIDE SEQUENCE [MRNA]</scope>
    <scope>FUNCTION</scope>
    <scope>INTERACTION WITH STAT3</scope>
    <scope>SUBCELLULAR LOCATION</scope>
    <source>
        <strain>Swiss Webster / NIH</strain>
    </source>
</reference>
<reference key="3">
    <citation type="journal article" date="2005" name="Science">
        <title>The transcriptional landscape of the mammalian genome.</title>
        <authorList>
            <person name="Carninci P."/>
            <person name="Kasukawa T."/>
            <person name="Katayama S."/>
            <person name="Gough J."/>
            <person name="Frith M.C."/>
            <person name="Maeda N."/>
            <person name="Oyama R."/>
            <person name="Ravasi T."/>
            <person name="Lenhard B."/>
            <person name="Wells C."/>
            <person name="Kodzius R."/>
            <person name="Shimokawa K."/>
            <person name="Bajic V.B."/>
            <person name="Brenner S.E."/>
            <person name="Batalov S."/>
            <person name="Forrest A.R."/>
            <person name="Zavolan M."/>
            <person name="Davis M.J."/>
            <person name="Wilming L.G."/>
            <person name="Aidinis V."/>
            <person name="Allen J.E."/>
            <person name="Ambesi-Impiombato A."/>
            <person name="Apweiler R."/>
            <person name="Aturaliya R.N."/>
            <person name="Bailey T.L."/>
            <person name="Bansal M."/>
            <person name="Baxter L."/>
            <person name="Beisel K.W."/>
            <person name="Bersano T."/>
            <person name="Bono H."/>
            <person name="Chalk A.M."/>
            <person name="Chiu K.P."/>
            <person name="Choudhary V."/>
            <person name="Christoffels A."/>
            <person name="Clutterbuck D.R."/>
            <person name="Crowe M.L."/>
            <person name="Dalla E."/>
            <person name="Dalrymple B.P."/>
            <person name="de Bono B."/>
            <person name="Della Gatta G."/>
            <person name="di Bernardo D."/>
            <person name="Down T."/>
            <person name="Engstrom P."/>
            <person name="Fagiolini M."/>
            <person name="Faulkner G."/>
            <person name="Fletcher C.F."/>
            <person name="Fukushima T."/>
            <person name="Furuno M."/>
            <person name="Futaki S."/>
            <person name="Gariboldi M."/>
            <person name="Georgii-Hemming P."/>
            <person name="Gingeras T.R."/>
            <person name="Gojobori T."/>
            <person name="Green R.E."/>
            <person name="Gustincich S."/>
            <person name="Harbers M."/>
            <person name="Hayashi Y."/>
            <person name="Hensch T.K."/>
            <person name="Hirokawa N."/>
            <person name="Hill D."/>
            <person name="Huminiecki L."/>
            <person name="Iacono M."/>
            <person name="Ikeo K."/>
            <person name="Iwama A."/>
            <person name="Ishikawa T."/>
            <person name="Jakt M."/>
            <person name="Kanapin A."/>
            <person name="Katoh M."/>
            <person name="Kawasawa Y."/>
            <person name="Kelso J."/>
            <person name="Kitamura H."/>
            <person name="Kitano H."/>
            <person name="Kollias G."/>
            <person name="Krishnan S.P."/>
            <person name="Kruger A."/>
            <person name="Kummerfeld S.K."/>
            <person name="Kurochkin I.V."/>
            <person name="Lareau L.F."/>
            <person name="Lazarevic D."/>
            <person name="Lipovich L."/>
            <person name="Liu J."/>
            <person name="Liuni S."/>
            <person name="McWilliam S."/>
            <person name="Madan Babu M."/>
            <person name="Madera M."/>
            <person name="Marchionni L."/>
            <person name="Matsuda H."/>
            <person name="Matsuzawa S."/>
            <person name="Miki H."/>
            <person name="Mignone F."/>
            <person name="Miyake S."/>
            <person name="Morris K."/>
            <person name="Mottagui-Tabar S."/>
            <person name="Mulder N."/>
            <person name="Nakano N."/>
            <person name="Nakauchi H."/>
            <person name="Ng P."/>
            <person name="Nilsson R."/>
            <person name="Nishiguchi S."/>
            <person name="Nishikawa S."/>
            <person name="Nori F."/>
            <person name="Ohara O."/>
            <person name="Okazaki Y."/>
            <person name="Orlando V."/>
            <person name="Pang K.C."/>
            <person name="Pavan W.J."/>
            <person name="Pavesi G."/>
            <person name="Pesole G."/>
            <person name="Petrovsky N."/>
            <person name="Piazza S."/>
            <person name="Reed J."/>
            <person name="Reid J.F."/>
            <person name="Ring B.Z."/>
            <person name="Ringwald M."/>
            <person name="Rost B."/>
            <person name="Ruan Y."/>
            <person name="Salzberg S.L."/>
            <person name="Sandelin A."/>
            <person name="Schneider C."/>
            <person name="Schoenbach C."/>
            <person name="Sekiguchi K."/>
            <person name="Semple C.A."/>
            <person name="Seno S."/>
            <person name="Sessa L."/>
            <person name="Sheng Y."/>
            <person name="Shibata Y."/>
            <person name="Shimada H."/>
            <person name="Shimada K."/>
            <person name="Silva D."/>
            <person name="Sinclair B."/>
            <person name="Sperling S."/>
            <person name="Stupka E."/>
            <person name="Sugiura K."/>
            <person name="Sultana R."/>
            <person name="Takenaka Y."/>
            <person name="Taki K."/>
            <person name="Tammoja K."/>
            <person name="Tan S.L."/>
            <person name="Tang S."/>
            <person name="Taylor M.S."/>
            <person name="Tegner J."/>
            <person name="Teichmann S.A."/>
            <person name="Ueda H.R."/>
            <person name="van Nimwegen E."/>
            <person name="Verardo R."/>
            <person name="Wei C.L."/>
            <person name="Yagi K."/>
            <person name="Yamanishi H."/>
            <person name="Zabarovsky E."/>
            <person name="Zhu S."/>
            <person name="Zimmer A."/>
            <person name="Hide W."/>
            <person name="Bult C."/>
            <person name="Grimmond S.M."/>
            <person name="Teasdale R.D."/>
            <person name="Liu E.T."/>
            <person name="Brusic V."/>
            <person name="Quackenbush J."/>
            <person name="Wahlestedt C."/>
            <person name="Mattick J.S."/>
            <person name="Hume D.A."/>
            <person name="Kai C."/>
            <person name="Sasaki D."/>
            <person name="Tomaru Y."/>
            <person name="Fukuda S."/>
            <person name="Kanamori-Katayama M."/>
            <person name="Suzuki M."/>
            <person name="Aoki J."/>
            <person name="Arakawa T."/>
            <person name="Iida J."/>
            <person name="Imamura K."/>
            <person name="Itoh M."/>
            <person name="Kato T."/>
            <person name="Kawaji H."/>
            <person name="Kawagashira N."/>
            <person name="Kawashima T."/>
            <person name="Kojima M."/>
            <person name="Kondo S."/>
            <person name="Konno H."/>
            <person name="Nakano K."/>
            <person name="Ninomiya N."/>
            <person name="Nishio T."/>
            <person name="Okada M."/>
            <person name="Plessy C."/>
            <person name="Shibata K."/>
            <person name="Shiraki T."/>
            <person name="Suzuki S."/>
            <person name="Tagami M."/>
            <person name="Waki K."/>
            <person name="Watahiki A."/>
            <person name="Okamura-Oho Y."/>
            <person name="Suzuki H."/>
            <person name="Kawai J."/>
            <person name="Hayashizaki Y."/>
        </authorList>
    </citation>
    <scope>NUCLEOTIDE SEQUENCE [LARGE SCALE MRNA]</scope>
    <source>
        <strain>C57BL/6J</strain>
        <strain>NOD</strain>
        <tissue>Spleen</tissue>
        <tissue>Testis</tissue>
    </source>
</reference>
<reference key="4">
    <citation type="journal article" date="2004" name="Genome Res.">
        <title>The status, quality, and expansion of the NIH full-length cDNA project: the Mammalian Gene Collection (MGC).</title>
        <authorList>
            <consortium name="The MGC Project Team"/>
        </authorList>
    </citation>
    <scope>NUCLEOTIDE SEQUENCE [LARGE SCALE MRNA]</scope>
    <source>
        <strain>FVB/N</strain>
        <tissue>Brain</tissue>
        <tissue>Mammary tumor</tissue>
    </source>
</reference>
<reference key="5">
    <citation type="journal article" date="2015" name="FEBS Lett.">
        <title>Nuclear termination of STAT3 signaling through SIPAR (STAT3-Interacting Protein As a Repressor)-dependent recruitment of T cell tyrosine phosphatase TC-PTP.</title>
        <authorList>
            <person name="Ren F."/>
            <person name="Geng Y."/>
            <person name="Minami T."/>
            <person name="Qiu Y."/>
            <person name="Feng Y."/>
            <person name="Liu C."/>
            <person name="Zhao J."/>
            <person name="Wang Y."/>
            <person name="Fan X."/>
            <person name="Wang Y."/>
            <person name="Li M."/>
            <person name="Li J."/>
            <person name="Chang Z."/>
        </authorList>
    </citation>
    <scope>FUNCTION</scope>
    <scope>INTERACTION WITH PTPN2 AND STAT3</scope>
    <scope>SUBCELLULAR LOCATION</scope>
</reference>
<organism>
    <name type="scientific">Mus musculus</name>
    <name type="common">Mouse</name>
    <dbReference type="NCBI Taxonomy" id="10090"/>
    <lineage>
        <taxon>Eukaryota</taxon>
        <taxon>Metazoa</taxon>
        <taxon>Chordata</taxon>
        <taxon>Craniata</taxon>
        <taxon>Vertebrata</taxon>
        <taxon>Euteleostomi</taxon>
        <taxon>Mammalia</taxon>
        <taxon>Eutheria</taxon>
        <taxon>Euarchontoglires</taxon>
        <taxon>Glires</taxon>
        <taxon>Rodentia</taxon>
        <taxon>Myomorpha</taxon>
        <taxon>Muroidea</taxon>
        <taxon>Muridae</taxon>
        <taxon>Murinae</taxon>
        <taxon>Mus</taxon>
        <taxon>Mus</taxon>
    </lineage>
</organism>
<name>F220A_MOUSE</name>
<evidence type="ECO:0000256" key="1">
    <source>
        <dbReference type="SAM" id="MobiDB-lite"/>
    </source>
</evidence>
<evidence type="ECO:0000269" key="2">
    <source>
    </source>
</evidence>
<evidence type="ECO:0000269" key="3">
    <source>
    </source>
</evidence>
<evidence type="ECO:0000269" key="4">
    <source>
    </source>
</evidence>
<evidence type="ECO:0000269" key="5">
    <source>
    </source>
</evidence>
<evidence type="ECO:0000303" key="6">
    <source>
    </source>
</evidence>
<evidence type="ECO:0000303" key="7">
    <source>
    </source>
</evidence>
<evidence type="ECO:0000305" key="8"/>
<evidence type="ECO:0000312" key="9">
    <source>
        <dbReference type="MGI" id="MGI:1914488"/>
    </source>
</evidence>
<keyword id="KW-0963">Cytoplasm</keyword>
<keyword id="KW-0968">Cytoplasmic vesicle</keyword>
<keyword id="KW-0539">Nucleus</keyword>
<keyword id="KW-1185">Reference proteome</keyword>
<proteinExistence type="evidence at protein level"/>
<gene>
    <name evidence="9" type="primary">Fam220a</name>
    <name evidence="6" type="synonym">Acpin1</name>
    <name evidence="7" type="synonym">Sipar</name>
</gene>
<accession>Q3ZN08</accession>
<accession>B2RVG9</accession>
<accession>Q8BPE1</accession>
<accession>Q99JV7</accession>
<accession>Q9D5Z1</accession>
<feature type="chain" id="PRO_0000321925" description="Protein FAM220A">
    <location>
        <begin position="1"/>
        <end position="260"/>
    </location>
</feature>
<feature type="region of interest" description="Disordered" evidence="1">
    <location>
        <begin position="1"/>
        <end position="75"/>
    </location>
</feature>
<feature type="region of interest" description="Disordered" evidence="1">
    <location>
        <begin position="129"/>
        <end position="158"/>
    </location>
</feature>
<feature type="compositionally biased region" description="Polar residues" evidence="1">
    <location>
        <begin position="35"/>
        <end position="47"/>
    </location>
</feature>
<feature type="sequence conflict" description="In Ref. 3; BAC36204." evidence="8" ref="3">
    <original>A</original>
    <variation>P</variation>
    <location>
        <position position="59"/>
    </location>
</feature>
<feature type="sequence conflict" description="In Ref. 3; BAB29560." evidence="8" ref="3">
    <original>A</original>
    <variation>S</variation>
    <location>
        <position position="64"/>
    </location>
</feature>
<feature type="sequence conflict" description="In Ref. 3; BAB29560." evidence="8" ref="3">
    <original>D</original>
    <variation>G</variation>
    <location>
        <position position="131"/>
    </location>
</feature>